<dbReference type="EMBL" id="CU329670">
    <property type="protein sequence ID" value="CAA91078.1"/>
    <property type="molecule type" value="Genomic_DNA"/>
</dbReference>
<dbReference type="PIR" id="S62428">
    <property type="entry name" value="S62428"/>
</dbReference>
<dbReference type="RefSeq" id="NP_593028.1">
    <property type="nucleotide sequence ID" value="NM_001018427.2"/>
</dbReference>
<dbReference type="PDB" id="4KK0">
    <property type="method" value="X-ray"/>
    <property type="resolution" value="2.90 A"/>
    <property type="chains" value="A/B/C/D/E/F/G/H/I/J=1-431"/>
</dbReference>
<dbReference type="PDB" id="4KK1">
    <property type="method" value="X-ray"/>
    <property type="resolution" value="3.30 A"/>
    <property type="chains" value="A/B/C/D/E/F/G/H/I/J/K/L/M/N/O/P/Q/R/S/T=1-431"/>
</dbReference>
<dbReference type="PDBsum" id="4KK0"/>
<dbReference type="PDBsum" id="4KK1"/>
<dbReference type="SMR" id="Q09778"/>
<dbReference type="BioGRID" id="278359">
    <property type="interactions" value="90"/>
</dbReference>
<dbReference type="FunCoup" id="Q09778">
    <property type="interactions" value="2"/>
</dbReference>
<dbReference type="IntAct" id="Q09778">
    <property type="interactions" value="1"/>
</dbReference>
<dbReference type="STRING" id="284812.Q09778"/>
<dbReference type="iPTMnet" id="Q09778"/>
<dbReference type="PaxDb" id="4896-SPAC22F3.13.1"/>
<dbReference type="DNASU" id="2541869"/>
<dbReference type="EnsemblFungi" id="SPAC22F3.13.1">
    <property type="protein sequence ID" value="SPAC22F3.13.1:pep"/>
    <property type="gene ID" value="SPAC22F3.13"/>
</dbReference>
<dbReference type="GeneID" id="2541869"/>
<dbReference type="KEGG" id="spo:2541869"/>
<dbReference type="PomBase" id="SPAC22F3.13">
    <property type="gene designation" value="tsc1"/>
</dbReference>
<dbReference type="VEuPathDB" id="FungiDB:SPAC22F3.13"/>
<dbReference type="eggNOG" id="ENOG502R01W">
    <property type="taxonomic scope" value="Eukaryota"/>
</dbReference>
<dbReference type="HOGENOM" id="CLU_314266_0_0_1"/>
<dbReference type="InParanoid" id="Q09778"/>
<dbReference type="OMA" id="IMFLPHI"/>
<dbReference type="PhylomeDB" id="Q09778"/>
<dbReference type="Reactome" id="R-SPO-165181">
    <property type="pathway name" value="Inhibition of TSC complex formation by PKB"/>
</dbReference>
<dbReference type="Reactome" id="R-SPO-380972">
    <property type="pathway name" value="Energy dependent regulation of mTOR by LKB1-AMPK"/>
</dbReference>
<dbReference type="Reactome" id="R-SPO-5628897">
    <property type="pathway name" value="TP53 Regulates Metabolic Genes"/>
</dbReference>
<dbReference type="EvolutionaryTrace" id="Q09778"/>
<dbReference type="PRO" id="PR:Q09778"/>
<dbReference type="Proteomes" id="UP000002485">
    <property type="component" value="Chromosome I"/>
</dbReference>
<dbReference type="GO" id="GO:0005737">
    <property type="term" value="C:cytoplasm"/>
    <property type="evidence" value="ECO:0007005"/>
    <property type="project" value="PomBase"/>
</dbReference>
<dbReference type="GO" id="GO:0033596">
    <property type="term" value="C:TSC1-TSC2 complex"/>
    <property type="evidence" value="ECO:0000353"/>
    <property type="project" value="PomBase"/>
</dbReference>
<dbReference type="GO" id="GO:0005096">
    <property type="term" value="F:GTPase activator activity"/>
    <property type="evidence" value="ECO:0000303"/>
    <property type="project" value="PomBase"/>
</dbReference>
<dbReference type="GO" id="GO:2000134">
    <property type="term" value="P:negative regulation of G1/S transition of mitotic cell cycle"/>
    <property type="evidence" value="ECO:0000315"/>
    <property type="project" value="PomBase"/>
</dbReference>
<dbReference type="GO" id="GO:0032007">
    <property type="term" value="P:negative regulation of TOR signaling"/>
    <property type="evidence" value="ECO:0000318"/>
    <property type="project" value="GO_Central"/>
</dbReference>
<dbReference type="GO" id="GO:1904262">
    <property type="term" value="P:negative regulation of TORC1 signaling"/>
    <property type="evidence" value="ECO:0000315"/>
    <property type="project" value="PomBase"/>
</dbReference>
<dbReference type="GO" id="GO:1905589">
    <property type="term" value="P:positive regulation of L-arginine import across plasma membrane"/>
    <property type="evidence" value="ECO:0000315"/>
    <property type="project" value="PomBase"/>
</dbReference>
<dbReference type="GO" id="GO:1905534">
    <property type="term" value="P:positive regulation of L-leucine import across plasma membrane"/>
    <property type="evidence" value="ECO:0000315"/>
    <property type="project" value="PomBase"/>
</dbReference>
<dbReference type="GO" id="GO:1905626">
    <property type="term" value="P:positive regulation of L-methionine import across plasma membrane"/>
    <property type="evidence" value="ECO:0000315"/>
    <property type="project" value="PomBase"/>
</dbReference>
<dbReference type="GO" id="GO:0051726">
    <property type="term" value="P:regulation of cell cycle"/>
    <property type="evidence" value="ECO:0000318"/>
    <property type="project" value="GO_Central"/>
</dbReference>
<dbReference type="InterPro" id="IPR016024">
    <property type="entry name" value="ARM-type_fold"/>
</dbReference>
<dbReference type="InterPro" id="IPR007483">
    <property type="entry name" value="Hamartin"/>
</dbReference>
<dbReference type="PANTHER" id="PTHR15154">
    <property type="entry name" value="HAMARTIN"/>
    <property type="match status" value="1"/>
</dbReference>
<dbReference type="PANTHER" id="PTHR15154:SF2">
    <property type="entry name" value="HAMARTIN"/>
    <property type="match status" value="1"/>
</dbReference>
<dbReference type="Pfam" id="PF04388">
    <property type="entry name" value="Hamartin"/>
    <property type="match status" value="1"/>
</dbReference>
<dbReference type="SUPFAM" id="SSF48371">
    <property type="entry name" value="ARM repeat"/>
    <property type="match status" value="1"/>
</dbReference>
<organism>
    <name type="scientific">Schizosaccharomyces pombe (strain 972 / ATCC 24843)</name>
    <name type="common">Fission yeast</name>
    <dbReference type="NCBI Taxonomy" id="284812"/>
    <lineage>
        <taxon>Eukaryota</taxon>
        <taxon>Fungi</taxon>
        <taxon>Dikarya</taxon>
        <taxon>Ascomycota</taxon>
        <taxon>Taphrinomycotina</taxon>
        <taxon>Schizosaccharomycetes</taxon>
        <taxon>Schizosaccharomycetales</taxon>
        <taxon>Schizosaccharomycetaceae</taxon>
        <taxon>Schizosaccharomyces</taxon>
    </lineage>
</organism>
<protein>
    <recommendedName>
        <fullName>Tuberous sclerosis 1 protein homolog</fullName>
    </recommendedName>
</protein>
<reference key="1">
    <citation type="journal article" date="2002" name="Nature">
        <title>The genome sequence of Schizosaccharomyces pombe.</title>
        <authorList>
            <person name="Wood V."/>
            <person name="Gwilliam R."/>
            <person name="Rajandream M.A."/>
            <person name="Lyne M.H."/>
            <person name="Lyne R."/>
            <person name="Stewart A."/>
            <person name="Sgouros J.G."/>
            <person name="Peat N."/>
            <person name="Hayles J."/>
            <person name="Baker S.G."/>
            <person name="Basham D."/>
            <person name="Bowman S."/>
            <person name="Brooks K."/>
            <person name="Brown D."/>
            <person name="Brown S."/>
            <person name="Chillingworth T."/>
            <person name="Churcher C.M."/>
            <person name="Collins M."/>
            <person name="Connor R."/>
            <person name="Cronin A."/>
            <person name="Davis P."/>
            <person name="Feltwell T."/>
            <person name="Fraser A."/>
            <person name="Gentles S."/>
            <person name="Goble A."/>
            <person name="Hamlin N."/>
            <person name="Harris D.E."/>
            <person name="Hidalgo J."/>
            <person name="Hodgson G."/>
            <person name="Holroyd S."/>
            <person name="Hornsby T."/>
            <person name="Howarth S."/>
            <person name="Huckle E.J."/>
            <person name="Hunt S."/>
            <person name="Jagels K."/>
            <person name="James K.D."/>
            <person name="Jones L."/>
            <person name="Jones M."/>
            <person name="Leather S."/>
            <person name="McDonald S."/>
            <person name="McLean J."/>
            <person name="Mooney P."/>
            <person name="Moule S."/>
            <person name="Mungall K.L."/>
            <person name="Murphy L.D."/>
            <person name="Niblett D."/>
            <person name="Odell C."/>
            <person name="Oliver K."/>
            <person name="O'Neil S."/>
            <person name="Pearson D."/>
            <person name="Quail M.A."/>
            <person name="Rabbinowitsch E."/>
            <person name="Rutherford K.M."/>
            <person name="Rutter S."/>
            <person name="Saunders D."/>
            <person name="Seeger K."/>
            <person name="Sharp S."/>
            <person name="Skelton J."/>
            <person name="Simmonds M.N."/>
            <person name="Squares R."/>
            <person name="Squares S."/>
            <person name="Stevens K."/>
            <person name="Taylor K."/>
            <person name="Taylor R.G."/>
            <person name="Tivey A."/>
            <person name="Walsh S.V."/>
            <person name="Warren T."/>
            <person name="Whitehead S."/>
            <person name="Woodward J.R."/>
            <person name="Volckaert G."/>
            <person name="Aert R."/>
            <person name="Robben J."/>
            <person name="Grymonprez B."/>
            <person name="Weltjens I."/>
            <person name="Vanstreels E."/>
            <person name="Rieger M."/>
            <person name="Schaefer M."/>
            <person name="Mueller-Auer S."/>
            <person name="Gabel C."/>
            <person name="Fuchs M."/>
            <person name="Duesterhoeft A."/>
            <person name="Fritzc C."/>
            <person name="Holzer E."/>
            <person name="Moestl D."/>
            <person name="Hilbert H."/>
            <person name="Borzym K."/>
            <person name="Langer I."/>
            <person name="Beck A."/>
            <person name="Lehrach H."/>
            <person name="Reinhardt R."/>
            <person name="Pohl T.M."/>
            <person name="Eger P."/>
            <person name="Zimmermann W."/>
            <person name="Wedler H."/>
            <person name="Wambutt R."/>
            <person name="Purnelle B."/>
            <person name="Goffeau A."/>
            <person name="Cadieu E."/>
            <person name="Dreano S."/>
            <person name="Gloux S."/>
            <person name="Lelaure V."/>
            <person name="Mottier S."/>
            <person name="Galibert F."/>
            <person name="Aves S.J."/>
            <person name="Xiang Z."/>
            <person name="Hunt C."/>
            <person name="Moore K."/>
            <person name="Hurst S.M."/>
            <person name="Lucas M."/>
            <person name="Rochet M."/>
            <person name="Gaillardin C."/>
            <person name="Tallada V.A."/>
            <person name="Garzon A."/>
            <person name="Thode G."/>
            <person name="Daga R.R."/>
            <person name="Cruzado L."/>
            <person name="Jimenez J."/>
            <person name="Sanchez M."/>
            <person name="del Rey F."/>
            <person name="Benito J."/>
            <person name="Dominguez A."/>
            <person name="Revuelta J.L."/>
            <person name="Moreno S."/>
            <person name="Armstrong J."/>
            <person name="Forsburg S.L."/>
            <person name="Cerutti L."/>
            <person name="Lowe T."/>
            <person name="McCombie W.R."/>
            <person name="Paulsen I."/>
            <person name="Potashkin J."/>
            <person name="Shpakovski G.V."/>
            <person name="Ussery D."/>
            <person name="Barrell B.G."/>
            <person name="Nurse P."/>
        </authorList>
    </citation>
    <scope>NUCLEOTIDE SEQUENCE [LARGE SCALE GENOMIC DNA]</scope>
    <source>
        <strain>972 / ATCC 24843</strain>
    </source>
</reference>
<reference key="2">
    <citation type="journal article" date="2002" name="Genetics">
        <title>Role of the Tsc1-Tsc2 complex in signaling and transport across the cell membrane in the fission yeast Schizosaccharomyces pombe.</title>
        <authorList>
            <person name="Matsumoto S."/>
            <person name="Bandyopadhyay A."/>
            <person name="Kwiatkowski D.J."/>
            <person name="Maitra U."/>
            <person name="Matsumoto T."/>
        </authorList>
    </citation>
    <scope>FUNCTION</scope>
    <scope>INTERACTION WITH TSC2</scope>
</reference>
<reference key="3">
    <citation type="journal article" date="2004" name="J. Biol. Chem.">
        <title>Tsc1+ and tsc2+ regulate arginine uptake and metabolism in Schizosaccharomyces pombe.</title>
        <authorList>
            <person name="van Slegtenhorst M."/>
            <person name="Carr E."/>
            <person name="Stoyanova R."/>
            <person name="Kruger W.D."/>
            <person name="Henske E.P."/>
        </authorList>
    </citation>
    <scope>FUNCTION</scope>
</reference>
<reference key="4">
    <citation type="journal article" date="2006" name="Genetics">
        <title>A defect in protein farnesylation suppresses a loss of Schizosaccharomyces pombe tsc2+, a homolog of the human gene predisposing to tuberous sclerosis complex.</title>
        <authorList>
            <person name="Nakase Y."/>
            <person name="Fukuda K."/>
            <person name="Chikashige Y."/>
            <person name="Tsutsumi C."/>
            <person name="Morita D."/>
            <person name="Kawamoto S."/>
            <person name="Ohnuki M."/>
            <person name="Hiraoka Y."/>
            <person name="Matsumoto T."/>
        </authorList>
    </citation>
    <scope>FUNCTION</scope>
</reference>
<reference key="5">
    <citation type="journal article" date="2006" name="Nat. Biotechnol.">
        <title>ORFeome cloning and global analysis of protein localization in the fission yeast Schizosaccharomyces pombe.</title>
        <authorList>
            <person name="Matsuyama A."/>
            <person name="Arai R."/>
            <person name="Yashiroda Y."/>
            <person name="Shirai A."/>
            <person name="Kamata A."/>
            <person name="Sekido S."/>
            <person name="Kobayashi Y."/>
            <person name="Hashimoto A."/>
            <person name="Hamamoto M."/>
            <person name="Hiraoka Y."/>
            <person name="Horinouchi S."/>
            <person name="Yoshida M."/>
        </authorList>
    </citation>
    <scope>SUBCELLULAR LOCATION [LARGE SCALE ANALYSIS]</scope>
</reference>
<keyword id="KW-0002">3D-structure</keyword>
<keyword id="KW-0175">Coiled coil</keyword>
<keyword id="KW-0963">Cytoplasm</keyword>
<keyword id="KW-1185">Reference proteome</keyword>
<accession>Q09778</accession>
<sequence>MPLQSLVKALWNVLHEEESEGYPDLTELIAEVESYQQRYPKQNPTNSQKIRHILDEIYEKTPFNNTRRRILWLAVLKTVIPLLILDRQAVGEWWDQIFFPFLNSPTQLKPVFSDLKSILFYILIFHDEDEWGGDLRRECAEETITRLVDLYVSKAIENLGDVESQEQRNQTIECLVNVLVHYGIQRPKELSSCFCHHFLNPPTRIPILSVMVEVIRRQGPRLYEIPQTGFYDLVLKCAEFDTSPILLSYALSFILMILSHICNSLDDSLYRLFCIYLRFSMIDPTSGFPSSTASGNWEVFHDFMSTYASTTTSQTDSSYNDVHDIVGSSQPDYLESLDYSQLFSILYALYPINFLEFLRDPKLYASKHNFQIRYSFNQELLSTKSDGLLGRHLAHSNFLKYTAETELTDKSRWTRLDSIAVVALCNSLNAVGIAESVMDPFGGKLPTTYEETSSATGLLAYPNESHDIASEPFSISWPQNPSISGSVHSATTFDKAQLSNTEDSYDNISHGTSYSEGVSSIHMVKGERGSNNLELTSESLSSTNDTIRRLQRDLLFLQNELRFEKFVRQQHLQNIGKLHREHILDMAVESERQKLLLTNKRYKAQIELLNSEIDKHRSESQAALNRRVKWENDFNNKIKALREEKKAWKSEESELKSSIESLISQLESIRNSQIDIAFSKNQLELKLQLYETKLKEYEQHLSCVNISKKQVSSSSDTSFGNTKMDSSMILSNSEAVSDEQERELIESEKHRMKLESENLHLQANIELLKKDLEAINVVYEAKIFDLEKRLSSEANAPELHNPVNLNYDAQLSKISEIKENYDELLTRYRELEGKFLESQAEVEELKNFQKPLVDTGSSIHSSPGLQQSKFIIRNDSLHPKVGPPRRQSTDTSRSTFRQY</sequence>
<comment type="function">
    <text evidence="3 4 5">Together with tsc2, required for uptake of various amino acids from the environment and for proper conjugation. Involved in induction of gene expression of permeases and genes required for meiosis upon nitrogen starvation. May act as a GTPase-activating protein (GAP) for the small GTPase rhb1.</text>
</comment>
<comment type="subunit">
    <text evidence="3">Interacts with tsc2.</text>
</comment>
<comment type="subcellular location">
    <subcellularLocation>
        <location evidence="6">Cytoplasm</location>
    </subcellularLocation>
</comment>
<gene>
    <name type="primary">tsc1</name>
    <name type="ORF">SPAC22F3.13</name>
</gene>
<feature type="chain" id="PRO_0000065653" description="Tuberous sclerosis 1 protein homolog">
    <location>
        <begin position="1"/>
        <end position="899"/>
    </location>
</feature>
<feature type="region of interest" description="Disordered" evidence="2">
    <location>
        <begin position="874"/>
        <end position="899"/>
    </location>
</feature>
<feature type="coiled-coil region" evidence="1">
    <location>
        <begin position="540"/>
        <end position="706"/>
    </location>
</feature>
<feature type="coiled-coil region" evidence="1">
    <location>
        <begin position="737"/>
        <end position="847"/>
    </location>
</feature>
<feature type="compositionally biased region" description="Polar residues" evidence="2">
    <location>
        <begin position="889"/>
        <end position="899"/>
    </location>
</feature>
<feature type="helix" evidence="7">
    <location>
        <begin position="2"/>
        <end position="14"/>
    </location>
</feature>
<feature type="helix" evidence="7">
    <location>
        <begin position="26"/>
        <end position="38"/>
    </location>
</feature>
<feature type="helix" evidence="7">
    <location>
        <begin position="44"/>
        <end position="60"/>
    </location>
</feature>
<feature type="strand" evidence="7">
    <location>
        <begin position="63"/>
        <end position="65"/>
    </location>
</feature>
<feature type="helix" evidence="7">
    <location>
        <begin position="66"/>
        <end position="79"/>
    </location>
</feature>
<feature type="helix" evidence="7">
    <location>
        <begin position="80"/>
        <end position="82"/>
    </location>
</feature>
<feature type="helix" evidence="7">
    <location>
        <begin position="87"/>
        <end position="96"/>
    </location>
</feature>
<feature type="helix" evidence="7">
    <location>
        <begin position="98"/>
        <end position="103"/>
    </location>
</feature>
<feature type="helix" evidence="7">
    <location>
        <begin position="109"/>
        <end position="123"/>
    </location>
</feature>
<feature type="turn" evidence="7">
    <location>
        <begin position="128"/>
        <end position="131"/>
    </location>
</feature>
<feature type="helix" evidence="7">
    <location>
        <begin position="135"/>
        <end position="154"/>
    </location>
</feature>
<feature type="helix" evidence="7">
    <location>
        <begin position="165"/>
        <end position="185"/>
    </location>
</feature>
<feature type="helix" evidence="7">
    <location>
        <begin position="187"/>
        <end position="198"/>
    </location>
</feature>
<feature type="helix" evidence="7">
    <location>
        <begin position="201"/>
        <end position="203"/>
    </location>
</feature>
<feature type="helix" evidence="7">
    <location>
        <begin position="204"/>
        <end position="216"/>
    </location>
</feature>
<feature type="helix" evidence="7">
    <location>
        <begin position="222"/>
        <end position="228"/>
    </location>
</feature>
<feature type="helix" evidence="7">
    <location>
        <begin position="230"/>
        <end position="240"/>
    </location>
</feature>
<feature type="helix" evidence="7">
    <location>
        <begin position="244"/>
        <end position="258"/>
    </location>
</feature>
<feature type="turn" evidence="7">
    <location>
        <begin position="259"/>
        <end position="261"/>
    </location>
</feature>
<feature type="turn" evidence="7">
    <location>
        <begin position="264"/>
        <end position="268"/>
    </location>
</feature>
<feature type="helix" evidence="7">
    <location>
        <begin position="269"/>
        <end position="280"/>
    </location>
</feature>
<feature type="turn" evidence="7">
    <location>
        <begin position="284"/>
        <end position="286"/>
    </location>
</feature>
<feature type="helix" evidence="7">
    <location>
        <begin position="332"/>
        <end position="334"/>
    </location>
</feature>
<feature type="helix" evidence="7">
    <location>
        <begin position="339"/>
        <end position="349"/>
    </location>
</feature>
<feature type="helix" evidence="7">
    <location>
        <begin position="351"/>
        <end position="357"/>
    </location>
</feature>
<feature type="helix" evidence="7">
    <location>
        <begin position="361"/>
        <end position="366"/>
    </location>
</feature>
<feature type="turn" evidence="7">
    <location>
        <begin position="367"/>
        <end position="369"/>
    </location>
</feature>
<feature type="helix" evidence="7">
    <location>
        <begin position="378"/>
        <end position="389"/>
    </location>
</feature>
<feature type="helix" evidence="7">
    <location>
        <begin position="396"/>
        <end position="399"/>
    </location>
</feature>
<feature type="helix" evidence="7">
    <location>
        <begin position="403"/>
        <end position="407"/>
    </location>
</feature>
<feature type="helix" evidence="7">
    <location>
        <begin position="412"/>
        <end position="427"/>
    </location>
</feature>
<proteinExistence type="evidence at protein level"/>
<evidence type="ECO:0000255" key="1"/>
<evidence type="ECO:0000256" key="2">
    <source>
        <dbReference type="SAM" id="MobiDB-lite"/>
    </source>
</evidence>
<evidence type="ECO:0000269" key="3">
    <source>
    </source>
</evidence>
<evidence type="ECO:0000269" key="4">
    <source>
    </source>
</evidence>
<evidence type="ECO:0000269" key="5">
    <source>
    </source>
</evidence>
<evidence type="ECO:0000269" key="6">
    <source>
    </source>
</evidence>
<evidence type="ECO:0007829" key="7">
    <source>
        <dbReference type="PDB" id="4KK0"/>
    </source>
</evidence>
<name>TSC1_SCHPO</name>